<comment type="function">
    <text evidence="1">Cleaves peptides in various proteins in a process that requires ATP hydrolysis. Has a chymotrypsin-like activity. Plays a major role in the degradation of misfolded proteins.</text>
</comment>
<comment type="catalytic activity">
    <reaction evidence="1">
        <text>Hydrolysis of proteins to small peptides in the presence of ATP and magnesium. alpha-casein is the usual test substrate. In the absence of ATP, only oligopeptides shorter than five residues are hydrolyzed (such as succinyl-Leu-Tyr-|-NHMec, and Leu-Tyr-Leu-|-Tyr-Trp, in which cleavage of the -Tyr-|-Leu- and -Tyr-|-Trp bonds also occurs).</text>
        <dbReference type="EC" id="3.4.21.92"/>
    </reaction>
</comment>
<comment type="subunit">
    <text evidence="1">Fourteen ClpP subunits assemble into 2 heptameric rings which stack back to back to give a disk-like structure with a central cavity, resembling the structure of eukaryotic proteasomes.</text>
</comment>
<comment type="subcellular location">
    <subcellularLocation>
        <location evidence="1">Cytoplasm</location>
    </subcellularLocation>
</comment>
<comment type="similarity">
    <text evidence="1">Belongs to the peptidase S14 family.</text>
</comment>
<keyword id="KW-0963">Cytoplasm</keyword>
<keyword id="KW-0378">Hydrolase</keyword>
<keyword id="KW-0645">Protease</keyword>
<keyword id="KW-0720">Serine protease</keyword>
<proteinExistence type="inferred from homology"/>
<reference key="1">
    <citation type="journal article" date="2008" name="Mol. Biol. Evol.">
        <title>Genome evolution of Wolbachia strain wPip from the Culex pipiens group.</title>
        <authorList>
            <person name="Klasson L."/>
            <person name="Walker T."/>
            <person name="Sebaihia M."/>
            <person name="Sanders M.J."/>
            <person name="Quail M.A."/>
            <person name="Lord A."/>
            <person name="Sanders S."/>
            <person name="Earl J."/>
            <person name="O'Neill S.L."/>
            <person name="Thomson N."/>
            <person name="Sinkins S.P."/>
            <person name="Parkhill J."/>
        </authorList>
    </citation>
    <scope>NUCLEOTIDE SEQUENCE [LARGE SCALE GENOMIC DNA]</scope>
    <source>
        <strain>wPip</strain>
    </source>
</reference>
<feature type="chain" id="PRO_1000124724" description="ATP-dependent Clp protease proteolytic subunit">
    <location>
        <begin position="1"/>
        <end position="208"/>
    </location>
</feature>
<feature type="active site" description="Nucleophile" evidence="1">
    <location>
        <position position="98"/>
    </location>
</feature>
<feature type="active site" evidence="1">
    <location>
        <position position="123"/>
    </location>
</feature>
<accession>B3CLB1</accession>
<protein>
    <recommendedName>
        <fullName evidence="1">ATP-dependent Clp protease proteolytic subunit</fullName>
        <ecNumber evidence="1">3.4.21.92</ecNumber>
    </recommendedName>
    <alternativeName>
        <fullName evidence="1">Endopeptidase Clp</fullName>
    </alternativeName>
</protein>
<organism>
    <name type="scientific">Wolbachia pipientis subsp. Culex pipiens (strain wPip)</name>
    <dbReference type="NCBI Taxonomy" id="570417"/>
    <lineage>
        <taxon>Bacteria</taxon>
        <taxon>Pseudomonadati</taxon>
        <taxon>Pseudomonadota</taxon>
        <taxon>Alphaproteobacteria</taxon>
        <taxon>Rickettsiales</taxon>
        <taxon>Anaplasmataceae</taxon>
        <taxon>Wolbachieae</taxon>
        <taxon>Wolbachia</taxon>
    </lineage>
</organism>
<sequence length="208" mass="23371">MTLIPIVVEQTSRGERAYDIYSRLVKERIIFVTGPIEDNMASVIVAQLLFLESENPDKDICMYINSPGGVVTAGLSIYDTMQYINPDVSTLCIGQAASMGSLLLTAGAEGKRYSLPHSRIMIHQPSGGYHGQATDIEIHANEILRVKKKLNQIYEKHTGNSLKKIEEMMERDKFMDPEEAMKTGLIDRVIAERKDMKIENIKVKQKVV</sequence>
<gene>
    <name evidence="1" type="primary">clpP</name>
    <name type="ordered locus">WP0570</name>
</gene>
<name>CLPP_WOLPP</name>
<dbReference type="EC" id="3.4.21.92" evidence="1"/>
<dbReference type="EMBL" id="AM999887">
    <property type="protein sequence ID" value="CAQ54678.1"/>
    <property type="molecule type" value="Genomic_DNA"/>
</dbReference>
<dbReference type="RefSeq" id="WP_007301999.1">
    <property type="nucleotide sequence ID" value="NC_010981.1"/>
</dbReference>
<dbReference type="SMR" id="B3CLB1"/>
<dbReference type="MEROPS" id="S14.001"/>
<dbReference type="KEGG" id="wpi:WP0570"/>
<dbReference type="eggNOG" id="COG0740">
    <property type="taxonomic scope" value="Bacteria"/>
</dbReference>
<dbReference type="HOGENOM" id="CLU_058707_3_2_5"/>
<dbReference type="Proteomes" id="UP000008814">
    <property type="component" value="Chromosome"/>
</dbReference>
<dbReference type="GO" id="GO:0005737">
    <property type="term" value="C:cytoplasm"/>
    <property type="evidence" value="ECO:0007669"/>
    <property type="project" value="UniProtKB-SubCell"/>
</dbReference>
<dbReference type="GO" id="GO:0009368">
    <property type="term" value="C:endopeptidase Clp complex"/>
    <property type="evidence" value="ECO:0007669"/>
    <property type="project" value="TreeGrafter"/>
</dbReference>
<dbReference type="GO" id="GO:0004176">
    <property type="term" value="F:ATP-dependent peptidase activity"/>
    <property type="evidence" value="ECO:0007669"/>
    <property type="project" value="InterPro"/>
</dbReference>
<dbReference type="GO" id="GO:0051117">
    <property type="term" value="F:ATPase binding"/>
    <property type="evidence" value="ECO:0007669"/>
    <property type="project" value="TreeGrafter"/>
</dbReference>
<dbReference type="GO" id="GO:0004252">
    <property type="term" value="F:serine-type endopeptidase activity"/>
    <property type="evidence" value="ECO:0007669"/>
    <property type="project" value="UniProtKB-UniRule"/>
</dbReference>
<dbReference type="GO" id="GO:0006515">
    <property type="term" value="P:protein quality control for misfolded or incompletely synthesized proteins"/>
    <property type="evidence" value="ECO:0007669"/>
    <property type="project" value="TreeGrafter"/>
</dbReference>
<dbReference type="CDD" id="cd07017">
    <property type="entry name" value="S14_ClpP_2"/>
    <property type="match status" value="1"/>
</dbReference>
<dbReference type="FunFam" id="3.90.226.10:FF:000001">
    <property type="entry name" value="ATP-dependent Clp protease proteolytic subunit"/>
    <property type="match status" value="1"/>
</dbReference>
<dbReference type="Gene3D" id="3.90.226.10">
    <property type="entry name" value="2-enoyl-CoA Hydratase, Chain A, domain 1"/>
    <property type="match status" value="1"/>
</dbReference>
<dbReference type="HAMAP" id="MF_00444">
    <property type="entry name" value="ClpP"/>
    <property type="match status" value="1"/>
</dbReference>
<dbReference type="InterPro" id="IPR001907">
    <property type="entry name" value="ClpP"/>
</dbReference>
<dbReference type="InterPro" id="IPR029045">
    <property type="entry name" value="ClpP/crotonase-like_dom_sf"/>
</dbReference>
<dbReference type="InterPro" id="IPR023562">
    <property type="entry name" value="ClpP/TepA"/>
</dbReference>
<dbReference type="InterPro" id="IPR033135">
    <property type="entry name" value="ClpP_His_AS"/>
</dbReference>
<dbReference type="InterPro" id="IPR018215">
    <property type="entry name" value="ClpP_Ser_AS"/>
</dbReference>
<dbReference type="NCBIfam" id="TIGR00493">
    <property type="entry name" value="clpP"/>
    <property type="match status" value="1"/>
</dbReference>
<dbReference type="NCBIfam" id="NF001368">
    <property type="entry name" value="PRK00277.1"/>
    <property type="match status" value="1"/>
</dbReference>
<dbReference type="NCBIfam" id="NF009205">
    <property type="entry name" value="PRK12553.1"/>
    <property type="match status" value="1"/>
</dbReference>
<dbReference type="PANTHER" id="PTHR10381">
    <property type="entry name" value="ATP-DEPENDENT CLP PROTEASE PROTEOLYTIC SUBUNIT"/>
    <property type="match status" value="1"/>
</dbReference>
<dbReference type="PANTHER" id="PTHR10381:SF70">
    <property type="entry name" value="ATP-DEPENDENT CLP PROTEASE PROTEOLYTIC SUBUNIT"/>
    <property type="match status" value="1"/>
</dbReference>
<dbReference type="Pfam" id="PF00574">
    <property type="entry name" value="CLP_protease"/>
    <property type="match status" value="1"/>
</dbReference>
<dbReference type="PRINTS" id="PR00127">
    <property type="entry name" value="CLPPROTEASEP"/>
</dbReference>
<dbReference type="SUPFAM" id="SSF52096">
    <property type="entry name" value="ClpP/crotonase"/>
    <property type="match status" value="1"/>
</dbReference>
<dbReference type="PROSITE" id="PS00382">
    <property type="entry name" value="CLP_PROTEASE_HIS"/>
    <property type="match status" value="1"/>
</dbReference>
<dbReference type="PROSITE" id="PS00381">
    <property type="entry name" value="CLP_PROTEASE_SER"/>
    <property type="match status" value="1"/>
</dbReference>
<evidence type="ECO:0000255" key="1">
    <source>
        <dbReference type="HAMAP-Rule" id="MF_00444"/>
    </source>
</evidence>